<organism>
    <name type="scientific">Methanosarcina mazei (strain ATCC BAA-159 / DSM 3647 / Goe1 / Go1 / JCM 11833 / OCM 88)</name>
    <name type="common">Methanosarcina frisia</name>
    <dbReference type="NCBI Taxonomy" id="192952"/>
    <lineage>
        <taxon>Archaea</taxon>
        <taxon>Methanobacteriati</taxon>
        <taxon>Methanobacteriota</taxon>
        <taxon>Stenosarchaea group</taxon>
        <taxon>Methanomicrobia</taxon>
        <taxon>Methanosarcinales</taxon>
        <taxon>Methanosarcinaceae</taxon>
        <taxon>Methanosarcina</taxon>
    </lineage>
</organism>
<proteinExistence type="inferred from homology"/>
<feature type="chain" id="PRO_0000076873" description="Probable 3-isopropylmalate dehydratase large subunit">
    <location>
        <begin position="1"/>
        <end position="420"/>
    </location>
</feature>
<feature type="binding site" evidence="1">
    <location>
        <position position="301"/>
    </location>
    <ligand>
        <name>[4Fe-4S] cluster</name>
        <dbReference type="ChEBI" id="CHEBI:49883"/>
    </ligand>
</feature>
<feature type="binding site" evidence="1">
    <location>
        <position position="361"/>
    </location>
    <ligand>
        <name>[4Fe-4S] cluster</name>
        <dbReference type="ChEBI" id="CHEBI:49883"/>
    </ligand>
</feature>
<feature type="binding site" evidence="1">
    <location>
        <position position="364"/>
    </location>
    <ligand>
        <name>[4Fe-4S] cluster</name>
        <dbReference type="ChEBI" id="CHEBI:49883"/>
    </ligand>
</feature>
<sequence>MTVSEKIFSKASGTPVKAGDFVLANIDLAMTHDITGPLAVQGFYEIMRDEEDKKVWDPSKIVIIFDHQVPADSINAAQNHIMLRKFAKEQGILNYDVYEGVCHQVLPEKGHVKPGDLIVGSDSHTCAYGSLGAFSTGIGSTDMAAVFATGKLWFRVPETFRFEVEGKLPERVYSKDLILHLIGDVGVEGVRYMAAEYAGSTIRSLSIPERMTMSNMAIEMGGKAGIIEADEVTEAYLKERIPGFKLDPYWKSDEGAKYLDIRYYDVSDLEPQVACPHNVDNVKPVSEVEGTKLDQIFMGSCTNGRFEDIKIMADIMGDEPVAKNLRLLVVPASKTEYMKLLKAGYIEKLVNAGAIVEAPCCGPCMGGSFGLLGPGEVGLATSNRNFKGREGSAESFVYLSSPATAGASALTGEITDPRKV</sequence>
<gene>
    <name evidence="1" type="primary">leuC</name>
    <name type="ordered locus">MM_2373</name>
</gene>
<name>LEUC_METMA</name>
<reference key="1">
    <citation type="journal article" date="2002" name="J. Mol. Microbiol. Biotechnol.">
        <title>The genome of Methanosarcina mazei: evidence for lateral gene transfer between Bacteria and Archaea.</title>
        <authorList>
            <person name="Deppenmeier U."/>
            <person name="Johann A."/>
            <person name="Hartsch T."/>
            <person name="Merkl R."/>
            <person name="Schmitz R.A."/>
            <person name="Martinez-Arias R."/>
            <person name="Henne A."/>
            <person name="Wiezer A."/>
            <person name="Baeumer S."/>
            <person name="Jacobi C."/>
            <person name="Brueggemann H."/>
            <person name="Lienard T."/>
            <person name="Christmann A."/>
            <person name="Boemecke M."/>
            <person name="Steckel S."/>
            <person name="Bhattacharyya A."/>
            <person name="Lykidis A."/>
            <person name="Overbeek R."/>
            <person name="Klenk H.-P."/>
            <person name="Gunsalus R.P."/>
            <person name="Fritz H.-J."/>
            <person name="Gottschalk G."/>
        </authorList>
    </citation>
    <scope>NUCLEOTIDE SEQUENCE [LARGE SCALE GENOMIC DNA]</scope>
    <source>
        <strain>ATCC BAA-159 / DSM 3647 / Goe1 / Go1 / JCM 11833 / OCM 88</strain>
    </source>
</reference>
<accession>Q8PUG1</accession>
<keyword id="KW-0004">4Fe-4S</keyword>
<keyword id="KW-0028">Amino-acid biosynthesis</keyword>
<keyword id="KW-0100">Branched-chain amino acid biosynthesis</keyword>
<keyword id="KW-0408">Iron</keyword>
<keyword id="KW-0411">Iron-sulfur</keyword>
<keyword id="KW-0432">Leucine biosynthesis</keyword>
<keyword id="KW-0456">Lyase</keyword>
<keyword id="KW-0479">Metal-binding</keyword>
<protein>
    <recommendedName>
        <fullName>Probable 3-isopropylmalate dehydratase large subunit</fullName>
        <ecNumber evidence="1">4.2.1.33</ecNumber>
    </recommendedName>
    <alternativeName>
        <fullName evidence="1">Alpha-IPM isomerase</fullName>
        <shortName evidence="1">IPMI</shortName>
    </alternativeName>
    <alternativeName>
        <fullName evidence="1">Isopropylmalate isomerase</fullName>
    </alternativeName>
</protein>
<comment type="function">
    <text evidence="1">Catalyzes the isomerization between 2-isopropylmalate and 3-isopropylmalate, via the formation of 2-isopropylmaleate.</text>
</comment>
<comment type="catalytic activity">
    <reaction evidence="1">
        <text>(2R,3S)-3-isopropylmalate = (2S)-2-isopropylmalate</text>
        <dbReference type="Rhea" id="RHEA:32287"/>
        <dbReference type="ChEBI" id="CHEBI:1178"/>
        <dbReference type="ChEBI" id="CHEBI:35121"/>
        <dbReference type="EC" id="4.2.1.33"/>
    </reaction>
</comment>
<comment type="cofactor">
    <cofactor evidence="1">
        <name>[4Fe-4S] cluster</name>
        <dbReference type="ChEBI" id="CHEBI:49883"/>
    </cofactor>
    <text evidence="1">Binds 1 [4Fe-4S] cluster per subunit.</text>
</comment>
<comment type="pathway">
    <text evidence="1">Amino-acid biosynthesis; L-leucine biosynthesis; L-leucine from 3-methyl-2-oxobutanoate: step 2/4.</text>
</comment>
<comment type="subunit">
    <text evidence="1">Heterodimer of LeuC and LeuD.</text>
</comment>
<comment type="similarity">
    <text evidence="1">Belongs to the aconitase/IPM isomerase family. LeuC type 2 subfamily.</text>
</comment>
<comment type="sequence caution" evidence="2">
    <conflict type="erroneous initiation">
        <sequence resource="EMBL-CDS" id="AAM32069"/>
    </conflict>
</comment>
<dbReference type="EC" id="4.2.1.33" evidence="1"/>
<dbReference type="EMBL" id="AE008384">
    <property type="protein sequence ID" value="AAM32069.1"/>
    <property type="status" value="ALT_INIT"/>
    <property type="molecule type" value="Genomic_DNA"/>
</dbReference>
<dbReference type="RefSeq" id="WP_048041093.1">
    <property type="nucleotide sequence ID" value="NC_003901.1"/>
</dbReference>
<dbReference type="SMR" id="Q8PUG1"/>
<dbReference type="KEGG" id="mma:MM_2373"/>
<dbReference type="PATRIC" id="fig|192952.21.peg.2715"/>
<dbReference type="eggNOG" id="arCOG01698">
    <property type="taxonomic scope" value="Archaea"/>
</dbReference>
<dbReference type="HOGENOM" id="CLU_006714_3_4_2"/>
<dbReference type="UniPathway" id="UPA00048">
    <property type="reaction ID" value="UER00071"/>
</dbReference>
<dbReference type="Proteomes" id="UP000000595">
    <property type="component" value="Chromosome"/>
</dbReference>
<dbReference type="GO" id="GO:0003861">
    <property type="term" value="F:3-isopropylmalate dehydratase activity"/>
    <property type="evidence" value="ECO:0007669"/>
    <property type="project" value="UniProtKB-UniRule"/>
</dbReference>
<dbReference type="GO" id="GO:0051539">
    <property type="term" value="F:4 iron, 4 sulfur cluster binding"/>
    <property type="evidence" value="ECO:0007669"/>
    <property type="project" value="UniProtKB-KW"/>
</dbReference>
<dbReference type="GO" id="GO:0046872">
    <property type="term" value="F:metal ion binding"/>
    <property type="evidence" value="ECO:0007669"/>
    <property type="project" value="UniProtKB-KW"/>
</dbReference>
<dbReference type="GO" id="GO:0009098">
    <property type="term" value="P:L-leucine biosynthetic process"/>
    <property type="evidence" value="ECO:0007669"/>
    <property type="project" value="UniProtKB-UniRule"/>
</dbReference>
<dbReference type="CDD" id="cd01583">
    <property type="entry name" value="IPMI"/>
    <property type="match status" value="1"/>
</dbReference>
<dbReference type="Gene3D" id="3.30.499.10">
    <property type="entry name" value="Aconitase, domain 3"/>
    <property type="match status" value="2"/>
</dbReference>
<dbReference type="HAMAP" id="MF_01027">
    <property type="entry name" value="LeuC_type2"/>
    <property type="match status" value="1"/>
</dbReference>
<dbReference type="InterPro" id="IPR015931">
    <property type="entry name" value="Acnase/IPM_dHydase_lsu_aba_1/3"/>
</dbReference>
<dbReference type="InterPro" id="IPR001030">
    <property type="entry name" value="Acoase/IPM_deHydtase_lsu_aba"/>
</dbReference>
<dbReference type="InterPro" id="IPR018136">
    <property type="entry name" value="Aconitase_4Fe-4S_BS"/>
</dbReference>
<dbReference type="InterPro" id="IPR036008">
    <property type="entry name" value="Aconitase_4Fe-4S_dom"/>
</dbReference>
<dbReference type="InterPro" id="IPR011826">
    <property type="entry name" value="HAcnase/IPMdehydase_lsu_prok"/>
</dbReference>
<dbReference type="InterPro" id="IPR006251">
    <property type="entry name" value="Homoacnase/IPMdehydase_lsu"/>
</dbReference>
<dbReference type="InterPro" id="IPR050067">
    <property type="entry name" value="IPM_dehydratase_rel_enz"/>
</dbReference>
<dbReference type="InterPro" id="IPR033941">
    <property type="entry name" value="IPMI_cat"/>
</dbReference>
<dbReference type="NCBIfam" id="TIGR01343">
    <property type="entry name" value="hacA_fam"/>
    <property type="match status" value="1"/>
</dbReference>
<dbReference type="NCBIfam" id="TIGR02086">
    <property type="entry name" value="IPMI_arch"/>
    <property type="match status" value="1"/>
</dbReference>
<dbReference type="NCBIfam" id="NF001614">
    <property type="entry name" value="PRK00402.1"/>
    <property type="match status" value="1"/>
</dbReference>
<dbReference type="PANTHER" id="PTHR43822">
    <property type="entry name" value="HOMOACONITASE, MITOCHONDRIAL-RELATED"/>
    <property type="match status" value="1"/>
</dbReference>
<dbReference type="PANTHER" id="PTHR43822:SF22">
    <property type="entry name" value="ISOPROPYLMALATE_CITRAMALATE ISOMERASE LARGE SUBUNIT"/>
    <property type="match status" value="1"/>
</dbReference>
<dbReference type="Pfam" id="PF00330">
    <property type="entry name" value="Aconitase"/>
    <property type="match status" value="2"/>
</dbReference>
<dbReference type="PRINTS" id="PR00415">
    <property type="entry name" value="ACONITASE"/>
</dbReference>
<dbReference type="SUPFAM" id="SSF53732">
    <property type="entry name" value="Aconitase iron-sulfur domain"/>
    <property type="match status" value="1"/>
</dbReference>
<dbReference type="PROSITE" id="PS01244">
    <property type="entry name" value="ACONITASE_2"/>
    <property type="match status" value="1"/>
</dbReference>
<evidence type="ECO:0000255" key="1">
    <source>
        <dbReference type="HAMAP-Rule" id="MF_01027"/>
    </source>
</evidence>
<evidence type="ECO:0000305" key="2"/>